<protein>
    <recommendedName>
        <fullName>Uncharacterized protein C11C11.01</fullName>
    </recommendedName>
</protein>
<accession>Q10200</accession>
<keyword id="KW-0963">Cytoplasm</keyword>
<keyword id="KW-0539">Nucleus</keyword>
<keyword id="KW-0597">Phosphoprotein</keyword>
<keyword id="KW-1185">Reference proteome</keyword>
<keyword id="KW-0694">RNA-binding</keyword>
<comment type="subcellular location">
    <subcellularLocation>
        <location evidence="4">Nucleus</location>
    </subcellularLocation>
    <subcellularLocation>
        <location evidence="4">Cytoplasm</location>
    </subcellularLocation>
</comment>
<proteinExistence type="evidence at protein level"/>
<organism>
    <name type="scientific">Schizosaccharomyces pombe (strain 972 / ATCC 24843)</name>
    <name type="common">Fission yeast</name>
    <dbReference type="NCBI Taxonomy" id="284812"/>
    <lineage>
        <taxon>Eukaryota</taxon>
        <taxon>Fungi</taxon>
        <taxon>Dikarya</taxon>
        <taxon>Ascomycota</taxon>
        <taxon>Taphrinomycotina</taxon>
        <taxon>Schizosaccharomycetes</taxon>
        <taxon>Schizosaccharomycetales</taxon>
        <taxon>Schizosaccharomycetaceae</taxon>
        <taxon>Schizosaccharomyces</taxon>
    </lineage>
</organism>
<gene>
    <name type="ORF">SPBC11C11.01</name>
    <name type="ORF">SPBC17D1.08</name>
</gene>
<name>YBY1_SCHPO</name>
<dbReference type="EMBL" id="CU329671">
    <property type="protein sequence ID" value="CAA20432.2"/>
    <property type="molecule type" value="Genomic_DNA"/>
</dbReference>
<dbReference type="PIR" id="T39711">
    <property type="entry name" value="S67384"/>
</dbReference>
<dbReference type="RefSeq" id="NP_596390.2">
    <property type="nucleotide sequence ID" value="NM_001022311.2"/>
</dbReference>
<dbReference type="SMR" id="Q10200"/>
<dbReference type="BioGRID" id="276300">
    <property type="interactions" value="8"/>
</dbReference>
<dbReference type="STRING" id="284812.Q10200"/>
<dbReference type="iPTMnet" id="Q10200"/>
<dbReference type="PaxDb" id="4896-SPBC11C11.01.1"/>
<dbReference type="EnsemblFungi" id="SPBC11C11.01.1">
    <property type="protein sequence ID" value="SPBC11C11.01.1:pep"/>
    <property type="gene ID" value="SPBC11C11.01"/>
</dbReference>
<dbReference type="KEGG" id="spo:2539748"/>
<dbReference type="PomBase" id="SPBC11C11.01"/>
<dbReference type="VEuPathDB" id="FungiDB:SPBC11C11.01"/>
<dbReference type="eggNOG" id="KOG0151">
    <property type="taxonomic scope" value="Eukaryota"/>
</dbReference>
<dbReference type="HOGENOM" id="CLU_565197_0_0_1"/>
<dbReference type="InParanoid" id="Q10200"/>
<dbReference type="OMA" id="MRMHAED"/>
<dbReference type="Reactome" id="R-SPO-72163">
    <property type="pathway name" value="mRNA Splicing - Major Pathway"/>
</dbReference>
<dbReference type="PRO" id="PR:Q10200"/>
<dbReference type="Proteomes" id="UP000002485">
    <property type="component" value="Chromosome II"/>
</dbReference>
<dbReference type="GO" id="GO:0005829">
    <property type="term" value="C:cytosol"/>
    <property type="evidence" value="ECO:0007005"/>
    <property type="project" value="PomBase"/>
</dbReference>
<dbReference type="GO" id="GO:0005634">
    <property type="term" value="C:nucleus"/>
    <property type="evidence" value="ECO:0007005"/>
    <property type="project" value="PomBase"/>
</dbReference>
<dbReference type="GO" id="GO:0005686">
    <property type="term" value="C:U2 snRNP"/>
    <property type="evidence" value="ECO:0000250"/>
    <property type="project" value="PomBase"/>
</dbReference>
<dbReference type="GO" id="GO:0003723">
    <property type="term" value="F:RNA binding"/>
    <property type="evidence" value="ECO:0000255"/>
    <property type="project" value="PomBase"/>
</dbReference>
<dbReference type="GO" id="GO:0045292">
    <property type="term" value="P:mRNA cis splicing, via spliceosome"/>
    <property type="evidence" value="ECO:0000250"/>
    <property type="project" value="PomBase"/>
</dbReference>
<dbReference type="CDD" id="cd00590">
    <property type="entry name" value="RRM_SF"/>
    <property type="match status" value="1"/>
</dbReference>
<dbReference type="Gene3D" id="1.25.40.90">
    <property type="match status" value="1"/>
</dbReference>
<dbReference type="Gene3D" id="3.30.70.330">
    <property type="match status" value="1"/>
</dbReference>
<dbReference type="InterPro" id="IPR006569">
    <property type="entry name" value="CID_dom"/>
</dbReference>
<dbReference type="InterPro" id="IPR008942">
    <property type="entry name" value="ENTH_VHS"/>
</dbReference>
<dbReference type="InterPro" id="IPR012677">
    <property type="entry name" value="Nucleotide-bd_a/b_plait_sf"/>
</dbReference>
<dbReference type="InterPro" id="IPR035979">
    <property type="entry name" value="RBD_domain_sf"/>
</dbReference>
<dbReference type="InterPro" id="IPR000504">
    <property type="entry name" value="RRM_dom"/>
</dbReference>
<dbReference type="InterPro" id="IPR051485">
    <property type="entry name" value="SR-CTD_assoc_factor"/>
</dbReference>
<dbReference type="PANTHER" id="PTHR23140">
    <property type="entry name" value="RNA PROCESSING PROTEIN LD23810P"/>
    <property type="match status" value="1"/>
</dbReference>
<dbReference type="PANTHER" id="PTHR23140:SF0">
    <property type="entry name" value="U2 SNRNP-ASSOCIATED SURP MOTIF-CONTAINING PROTEIN"/>
    <property type="match status" value="1"/>
</dbReference>
<dbReference type="Pfam" id="PF04818">
    <property type="entry name" value="CID"/>
    <property type="match status" value="1"/>
</dbReference>
<dbReference type="Pfam" id="PF00076">
    <property type="entry name" value="RRM_1"/>
    <property type="match status" value="1"/>
</dbReference>
<dbReference type="SMART" id="SM00582">
    <property type="entry name" value="RPR"/>
    <property type="match status" value="1"/>
</dbReference>
<dbReference type="SMART" id="SM00360">
    <property type="entry name" value="RRM"/>
    <property type="match status" value="1"/>
</dbReference>
<dbReference type="SUPFAM" id="SSF54928">
    <property type="entry name" value="RNA-binding domain, RBD"/>
    <property type="match status" value="1"/>
</dbReference>
<dbReference type="PROSITE" id="PS51391">
    <property type="entry name" value="CID"/>
    <property type="match status" value="1"/>
</dbReference>
<evidence type="ECO:0000250" key="1"/>
<evidence type="ECO:0000255" key="2">
    <source>
        <dbReference type="PROSITE-ProRule" id="PRU00724"/>
    </source>
</evidence>
<evidence type="ECO:0000256" key="3">
    <source>
        <dbReference type="SAM" id="MobiDB-lite"/>
    </source>
</evidence>
<evidence type="ECO:0000269" key="4">
    <source>
    </source>
</evidence>
<sequence length="466" mass="53881">MKKNNERVNTNPSLISKSYNMKKRPVIGTRRHFARKEIESDSDDEDDIFLAGERKKYLQNQSYERRKQKNEHGNNLTLQEELLRHEAYEKNEEIANENDVDQVNLMKYFVHMDNISPVTTNGSLKESLRKYSSIIAVNIFSETGDLKKGIAIFQDLSDAEQAVQYLSNCKIDGRLISATITNHPKRLPNAEHLESSTKTKDESQDKDKLTKLDRAKLEWLIQGLNCEKGSIGNLLCFAVEHVNNHVEITDAFLKEFFNDQPTDDTKVYDDDYINERGEKKLSLIYLMNDILFNGISGTSLVWRYRFSFEPHVERLLDDLYLFSKRLGGRIKEDIFCKKVVKVIEVWKTWIAFQEETLERAWRNFSGNTPQSPQINSAALKVETKNSWTAISEETEGLQDDEEYNGIPVDVNELLNVEFISQIPMSTETSSSSSPQPTEERKAKFKPSFTQGTFVSKRMRMHAEDLF</sequence>
<feature type="chain" id="PRO_0000116532" description="Uncharacterized protein C11C11.01">
    <location>
        <begin position="1"/>
        <end position="466"/>
    </location>
</feature>
<feature type="domain" description="RRM">
    <location>
        <begin position="108"/>
        <end position="183"/>
    </location>
</feature>
<feature type="domain" description="CID" evidence="2">
    <location>
        <begin position="209"/>
        <end position="368"/>
    </location>
</feature>
<feature type="region of interest" description="Disordered" evidence="3">
    <location>
        <begin position="1"/>
        <end position="22"/>
    </location>
</feature>
<feature type="region of interest" description="Disordered" evidence="3">
    <location>
        <begin position="186"/>
        <end position="207"/>
    </location>
</feature>
<feature type="region of interest" description="Disordered" evidence="3">
    <location>
        <begin position="425"/>
        <end position="448"/>
    </location>
</feature>
<feature type="compositionally biased region" description="Polar residues" evidence="3">
    <location>
        <begin position="7"/>
        <end position="19"/>
    </location>
</feature>
<feature type="compositionally biased region" description="Basic and acidic residues" evidence="3">
    <location>
        <begin position="188"/>
        <end position="207"/>
    </location>
</feature>
<feature type="compositionally biased region" description="Low complexity" evidence="3">
    <location>
        <begin position="425"/>
        <end position="436"/>
    </location>
</feature>
<feature type="modified residue" description="Phosphoserine" evidence="1">
    <location>
        <position position="40"/>
    </location>
</feature>
<feature type="modified residue" description="Phosphoserine" evidence="1">
    <location>
        <position position="42"/>
    </location>
</feature>
<feature type="modified residue" description="Phosphoserine" evidence="1">
    <location>
        <position position="371"/>
    </location>
</feature>
<reference key="1">
    <citation type="journal article" date="2002" name="Nature">
        <title>The genome sequence of Schizosaccharomyces pombe.</title>
        <authorList>
            <person name="Wood V."/>
            <person name="Gwilliam R."/>
            <person name="Rajandream M.A."/>
            <person name="Lyne M.H."/>
            <person name="Lyne R."/>
            <person name="Stewart A."/>
            <person name="Sgouros J.G."/>
            <person name="Peat N."/>
            <person name="Hayles J."/>
            <person name="Baker S.G."/>
            <person name="Basham D."/>
            <person name="Bowman S."/>
            <person name="Brooks K."/>
            <person name="Brown D."/>
            <person name="Brown S."/>
            <person name="Chillingworth T."/>
            <person name="Churcher C.M."/>
            <person name="Collins M."/>
            <person name="Connor R."/>
            <person name="Cronin A."/>
            <person name="Davis P."/>
            <person name="Feltwell T."/>
            <person name="Fraser A."/>
            <person name="Gentles S."/>
            <person name="Goble A."/>
            <person name="Hamlin N."/>
            <person name="Harris D.E."/>
            <person name="Hidalgo J."/>
            <person name="Hodgson G."/>
            <person name="Holroyd S."/>
            <person name="Hornsby T."/>
            <person name="Howarth S."/>
            <person name="Huckle E.J."/>
            <person name="Hunt S."/>
            <person name="Jagels K."/>
            <person name="James K.D."/>
            <person name="Jones L."/>
            <person name="Jones M."/>
            <person name="Leather S."/>
            <person name="McDonald S."/>
            <person name="McLean J."/>
            <person name="Mooney P."/>
            <person name="Moule S."/>
            <person name="Mungall K.L."/>
            <person name="Murphy L.D."/>
            <person name="Niblett D."/>
            <person name="Odell C."/>
            <person name="Oliver K."/>
            <person name="O'Neil S."/>
            <person name="Pearson D."/>
            <person name="Quail M.A."/>
            <person name="Rabbinowitsch E."/>
            <person name="Rutherford K.M."/>
            <person name="Rutter S."/>
            <person name="Saunders D."/>
            <person name="Seeger K."/>
            <person name="Sharp S."/>
            <person name="Skelton J."/>
            <person name="Simmonds M.N."/>
            <person name="Squares R."/>
            <person name="Squares S."/>
            <person name="Stevens K."/>
            <person name="Taylor K."/>
            <person name="Taylor R.G."/>
            <person name="Tivey A."/>
            <person name="Walsh S.V."/>
            <person name="Warren T."/>
            <person name="Whitehead S."/>
            <person name="Woodward J.R."/>
            <person name="Volckaert G."/>
            <person name="Aert R."/>
            <person name="Robben J."/>
            <person name="Grymonprez B."/>
            <person name="Weltjens I."/>
            <person name="Vanstreels E."/>
            <person name="Rieger M."/>
            <person name="Schaefer M."/>
            <person name="Mueller-Auer S."/>
            <person name="Gabel C."/>
            <person name="Fuchs M."/>
            <person name="Duesterhoeft A."/>
            <person name="Fritzc C."/>
            <person name="Holzer E."/>
            <person name="Moestl D."/>
            <person name="Hilbert H."/>
            <person name="Borzym K."/>
            <person name="Langer I."/>
            <person name="Beck A."/>
            <person name="Lehrach H."/>
            <person name="Reinhardt R."/>
            <person name="Pohl T.M."/>
            <person name="Eger P."/>
            <person name="Zimmermann W."/>
            <person name="Wedler H."/>
            <person name="Wambutt R."/>
            <person name="Purnelle B."/>
            <person name="Goffeau A."/>
            <person name="Cadieu E."/>
            <person name="Dreano S."/>
            <person name="Gloux S."/>
            <person name="Lelaure V."/>
            <person name="Mottier S."/>
            <person name="Galibert F."/>
            <person name="Aves S.J."/>
            <person name="Xiang Z."/>
            <person name="Hunt C."/>
            <person name="Moore K."/>
            <person name="Hurst S.M."/>
            <person name="Lucas M."/>
            <person name="Rochet M."/>
            <person name="Gaillardin C."/>
            <person name="Tallada V.A."/>
            <person name="Garzon A."/>
            <person name="Thode G."/>
            <person name="Daga R.R."/>
            <person name="Cruzado L."/>
            <person name="Jimenez J."/>
            <person name="Sanchez M."/>
            <person name="del Rey F."/>
            <person name="Benito J."/>
            <person name="Dominguez A."/>
            <person name="Revuelta J.L."/>
            <person name="Moreno S."/>
            <person name="Armstrong J."/>
            <person name="Forsburg S.L."/>
            <person name="Cerutti L."/>
            <person name="Lowe T."/>
            <person name="McCombie W.R."/>
            <person name="Paulsen I."/>
            <person name="Potashkin J."/>
            <person name="Shpakovski G.V."/>
            <person name="Ussery D."/>
            <person name="Barrell B.G."/>
            <person name="Nurse P."/>
        </authorList>
    </citation>
    <scope>NUCLEOTIDE SEQUENCE [LARGE SCALE GENOMIC DNA]</scope>
    <source>
        <strain>972 / ATCC 24843</strain>
    </source>
</reference>
<reference key="2">
    <citation type="journal article" date="2011" name="Science">
        <title>Comparative functional genomics of the fission yeasts.</title>
        <authorList>
            <person name="Rhind N."/>
            <person name="Chen Z."/>
            <person name="Yassour M."/>
            <person name="Thompson D.A."/>
            <person name="Haas B.J."/>
            <person name="Habib N."/>
            <person name="Wapinski I."/>
            <person name="Roy S."/>
            <person name="Lin M.F."/>
            <person name="Heiman D.I."/>
            <person name="Young S.K."/>
            <person name="Furuya K."/>
            <person name="Guo Y."/>
            <person name="Pidoux A."/>
            <person name="Chen H.M."/>
            <person name="Robbertse B."/>
            <person name="Goldberg J.M."/>
            <person name="Aoki K."/>
            <person name="Bayne E.H."/>
            <person name="Berlin A.M."/>
            <person name="Desjardins C.A."/>
            <person name="Dobbs E."/>
            <person name="Dukaj L."/>
            <person name="Fan L."/>
            <person name="FitzGerald M.G."/>
            <person name="French C."/>
            <person name="Gujja S."/>
            <person name="Hansen K."/>
            <person name="Keifenheim D."/>
            <person name="Levin J.Z."/>
            <person name="Mosher R.A."/>
            <person name="Mueller C.A."/>
            <person name="Pfiffner J."/>
            <person name="Priest M."/>
            <person name="Russ C."/>
            <person name="Smialowska A."/>
            <person name="Swoboda P."/>
            <person name="Sykes S.M."/>
            <person name="Vaughn M."/>
            <person name="Vengrova S."/>
            <person name="Yoder R."/>
            <person name="Zeng Q."/>
            <person name="Allshire R."/>
            <person name="Baulcombe D."/>
            <person name="Birren B.W."/>
            <person name="Brown W."/>
            <person name="Ekwall K."/>
            <person name="Kellis M."/>
            <person name="Leatherwood J."/>
            <person name="Levin H."/>
            <person name="Margalit H."/>
            <person name="Martienssen R."/>
            <person name="Nieduszynski C.A."/>
            <person name="Spatafora J.W."/>
            <person name="Friedman N."/>
            <person name="Dalgaard J.Z."/>
            <person name="Baumann P."/>
            <person name="Niki H."/>
            <person name="Regev A."/>
            <person name="Nusbaum C."/>
        </authorList>
    </citation>
    <scope>REVISION OF GENE MODEL</scope>
</reference>
<reference key="3">
    <citation type="journal article" date="2006" name="Nat. Biotechnol.">
        <title>ORFeome cloning and global analysis of protein localization in the fission yeast Schizosaccharomyces pombe.</title>
        <authorList>
            <person name="Matsuyama A."/>
            <person name="Arai R."/>
            <person name="Yashiroda Y."/>
            <person name="Shirai A."/>
            <person name="Kamata A."/>
            <person name="Sekido S."/>
            <person name="Kobayashi Y."/>
            <person name="Hashimoto A."/>
            <person name="Hamamoto M."/>
            <person name="Hiraoka Y."/>
            <person name="Horinouchi S."/>
            <person name="Yoshida M."/>
        </authorList>
    </citation>
    <scope>SUBCELLULAR LOCATION [LARGE SCALE ANALYSIS]</scope>
</reference>
<reference key="4">
    <citation type="journal article" date="2008" name="J. Proteome Res.">
        <title>Phosphoproteome analysis of fission yeast.</title>
        <authorList>
            <person name="Wilson-Grady J.T."/>
            <person name="Villen J."/>
            <person name="Gygi S.P."/>
        </authorList>
    </citation>
    <scope>PHOSPHORYLATION [LARGE SCALE ANALYSIS] AT SER-40; SER-42 AND SER-371</scope>
    <scope>IDENTIFICATION BY MASS SPECTROMETRY</scope>
</reference>